<proteinExistence type="evidence at protein level"/>
<feature type="signal peptide" evidence="1">
    <location>
        <begin position="1"/>
        <end position="25"/>
    </location>
</feature>
<feature type="chain" id="PRO_0000036007" description="UDP-glucuronosyltransferase 1A8">
    <location>
        <begin position="26"/>
        <end position="530"/>
    </location>
</feature>
<feature type="transmembrane region" description="Helical" evidence="1">
    <location>
        <begin position="488"/>
        <end position="504"/>
    </location>
</feature>
<feature type="glycosylation site" description="N-linked (GlcNAc...) asparagine" evidence="1">
    <location>
        <position position="71"/>
    </location>
</feature>
<feature type="glycosylation site" description="N-linked (GlcNAc...) asparagine" evidence="13">
    <location>
        <position position="292"/>
    </location>
</feature>
<feature type="glycosylation site" description="N-linked (GlcNAc...) asparagine" evidence="13">
    <location>
        <position position="344"/>
    </location>
</feature>
<feature type="splice variant" id="VSP_053964" description="In isoform 2." evidence="25">
    <original>SYKENIMRLSSLHKDRPVEPLDLAVFWVEFVMRHKGAPHLRPAAHDLTWYQYHSLDVIGFLLAVVLTVAFITFKCCAYGYRKCLGKKGRVKKAHKSKTH</original>
    <variation>RKKQQSGRQM</variation>
    <location>
        <begin position="432"/>
        <end position="530"/>
    </location>
</feature>
<feature type="sequence variant" id="VAR_052463" description="In dbSNP:rs45504099.">
    <original>H</original>
    <variation>N</variation>
    <location>
        <position position="53"/>
    </location>
</feature>
<feature type="sequence variant" id="VAR_015543" evidence="19 20">
    <original>K</original>
    <variation>R</variation>
    <location>
        <position position="132"/>
    </location>
</feature>
<feature type="sequence variant" id="VAR_058585" description="In dbSNP:rs17862841." evidence="14">
    <original>A</original>
    <variation>V</variation>
    <location>
        <position position="144"/>
    </location>
</feature>
<feature type="sequence variant" id="VAR_015544" evidence="19 20">
    <original>G</original>
    <variation>A</variation>
    <location>
        <position position="154"/>
    </location>
</feature>
<feature type="sequence variant" id="VAR_015545" description="In allele UGT1A8*2; dbSNP:rs1042597." evidence="2 4 14 19 20">
    <original>A</original>
    <variation>G</variation>
    <location>
        <position position="173"/>
    </location>
</feature>
<feature type="sequence variant" id="VAR_061871" description="In dbSNP:rs1042597.">
    <original>A</original>
    <variation>V</variation>
    <location>
        <position position="173"/>
    </location>
</feature>
<feature type="sequence variant" id="VAR_015546" description="In dbSNP:rs2072940939." evidence="19 20">
    <original>T</original>
    <variation>A</variation>
    <location>
        <position position="202"/>
    </location>
</feature>
<feature type="sequence variant" id="VAR_015547" description="In dbSNP:rs1126803." evidence="19 20">
    <original>M</original>
    <variation>L</variation>
    <location>
        <position position="212"/>
    </location>
</feature>
<feature type="sequence variant" id="VAR_058586" description="In dbSNP:rs72551325." evidence="14">
    <original>A</original>
    <variation>T</variation>
    <location>
        <position position="231"/>
    </location>
</feature>
<feature type="sequence variant" id="VAR_015549" description="In allele UGT1A8*3; dramatic reduction in catalytic activity; dbSNP:rs17863762." evidence="2 14">
    <original>C</original>
    <variation>Y</variation>
    <location>
        <position position="277"/>
    </location>
</feature>
<keyword id="KW-0025">Alternative splicing</keyword>
<keyword id="KW-0256">Endoplasmic reticulum</keyword>
<keyword id="KW-0325">Glycoprotein</keyword>
<keyword id="KW-0328">Glycosyltransferase</keyword>
<keyword id="KW-0443">Lipid metabolism</keyword>
<keyword id="KW-0472">Membrane</keyword>
<keyword id="KW-1267">Proteomics identification</keyword>
<keyword id="KW-1185">Reference proteome</keyword>
<keyword id="KW-0732">Signal</keyword>
<keyword id="KW-0808">Transferase</keyword>
<keyword id="KW-0812">Transmembrane</keyword>
<keyword id="KW-1133">Transmembrane helix</keyword>
<reference key="1">
    <citation type="journal article" date="1998" name="J. Biol. Chem.">
        <title>Expression of the UDP-glucuronosyltransferase 1A locus in human colon. Identification and characterization of the novel extrahepatic UGT1A8.</title>
        <authorList>
            <person name="Strassburg C.P."/>
            <person name="Manns M.P."/>
            <person name="Tukey R.H."/>
        </authorList>
    </citation>
    <scope>NUCLEOTIDE SEQUENCE [MRNA] (ISOFORM 1)</scope>
    <scope>TISSUE SPECIFICITY</scope>
    <scope>VARIANTS ARG-132; ALA-154; GLY-173; ALA-202 AND LEU-212</scope>
</reference>
<reference key="2">
    <citation type="journal article" date="2001" name="Pharmacogenetics">
        <title>Thirteen UDP-glucuronosyltransferase genes are encoded at the human UGT1 gene complex locus.</title>
        <authorList>
            <person name="Gong Q.H."/>
            <person name="Cho J.W."/>
            <person name="Huang T."/>
            <person name="Potter C."/>
            <person name="Gholami N."/>
            <person name="Basu N.K."/>
            <person name="Kubota S."/>
            <person name="Carvalho S."/>
            <person name="Pennington M.W."/>
            <person name="Owens I.S."/>
            <person name="Popescu N.C."/>
        </authorList>
    </citation>
    <scope>NUCLEOTIDE SEQUENCE [GENOMIC DNA]</scope>
</reference>
<reference key="3">
    <citation type="journal article" date="2002" name="Pharmacogenetics">
        <title>Identification and functional characterization of UDP-glucuronosyltransferases UGT1A8*1, UGT1A8*2 and UGT1A8*3.</title>
        <authorList>
            <person name="Huang Y.-H."/>
            <person name="Galijatovic A."/>
            <person name="Nguyen N."/>
            <person name="Geske D."/>
            <person name="Beaton D."/>
            <person name="Green J."/>
            <person name="Green M."/>
            <person name="Peters W.H."/>
            <person name="Tukey R.H."/>
        </authorList>
    </citation>
    <scope>NUCLEOTIDE SEQUENCE [MRNA] (ISOFORM 1)</scope>
    <scope>VARIANTS GLY-173 AND TYR-277</scope>
    <source>
        <tissue>Colon</tissue>
    </source>
</reference>
<reference key="4">
    <citation type="journal article" date="2004" name="Nat. Genet.">
        <title>Complete sequencing and characterization of 21,243 full-length human cDNAs.</title>
        <authorList>
            <person name="Ota T."/>
            <person name="Suzuki Y."/>
            <person name="Nishikawa T."/>
            <person name="Otsuki T."/>
            <person name="Sugiyama T."/>
            <person name="Irie R."/>
            <person name="Wakamatsu A."/>
            <person name="Hayashi K."/>
            <person name="Sato H."/>
            <person name="Nagai K."/>
            <person name="Kimura K."/>
            <person name="Makita H."/>
            <person name="Sekine M."/>
            <person name="Obayashi M."/>
            <person name="Nishi T."/>
            <person name="Shibahara T."/>
            <person name="Tanaka T."/>
            <person name="Ishii S."/>
            <person name="Yamamoto J."/>
            <person name="Saito K."/>
            <person name="Kawai Y."/>
            <person name="Isono Y."/>
            <person name="Nakamura Y."/>
            <person name="Nagahari K."/>
            <person name="Murakami K."/>
            <person name="Yasuda T."/>
            <person name="Iwayanagi T."/>
            <person name="Wagatsuma M."/>
            <person name="Shiratori A."/>
            <person name="Sudo H."/>
            <person name="Hosoiri T."/>
            <person name="Kaku Y."/>
            <person name="Kodaira H."/>
            <person name="Kondo H."/>
            <person name="Sugawara M."/>
            <person name="Takahashi M."/>
            <person name="Kanda K."/>
            <person name="Yokoi T."/>
            <person name="Furuya T."/>
            <person name="Kikkawa E."/>
            <person name="Omura Y."/>
            <person name="Abe K."/>
            <person name="Kamihara K."/>
            <person name="Katsuta N."/>
            <person name="Sato K."/>
            <person name="Tanikawa M."/>
            <person name="Yamazaki M."/>
            <person name="Ninomiya K."/>
            <person name="Ishibashi T."/>
            <person name="Yamashita H."/>
            <person name="Murakawa K."/>
            <person name="Fujimori K."/>
            <person name="Tanai H."/>
            <person name="Kimata M."/>
            <person name="Watanabe M."/>
            <person name="Hiraoka S."/>
            <person name="Chiba Y."/>
            <person name="Ishida S."/>
            <person name="Ono Y."/>
            <person name="Takiguchi S."/>
            <person name="Watanabe S."/>
            <person name="Yosida M."/>
            <person name="Hotuta T."/>
            <person name="Kusano J."/>
            <person name="Kanehori K."/>
            <person name="Takahashi-Fujii A."/>
            <person name="Hara H."/>
            <person name="Tanase T.-O."/>
            <person name="Nomura Y."/>
            <person name="Togiya S."/>
            <person name="Komai F."/>
            <person name="Hara R."/>
            <person name="Takeuchi K."/>
            <person name="Arita M."/>
            <person name="Imose N."/>
            <person name="Musashino K."/>
            <person name="Yuuki H."/>
            <person name="Oshima A."/>
            <person name="Sasaki N."/>
            <person name="Aotsuka S."/>
            <person name="Yoshikawa Y."/>
            <person name="Matsunawa H."/>
            <person name="Ichihara T."/>
            <person name="Shiohata N."/>
            <person name="Sano S."/>
            <person name="Moriya S."/>
            <person name="Momiyama H."/>
            <person name="Satoh N."/>
            <person name="Takami S."/>
            <person name="Terashima Y."/>
            <person name="Suzuki O."/>
            <person name="Nakagawa S."/>
            <person name="Senoh A."/>
            <person name="Mizoguchi H."/>
            <person name="Goto Y."/>
            <person name="Shimizu F."/>
            <person name="Wakebe H."/>
            <person name="Hishigaki H."/>
            <person name="Watanabe T."/>
            <person name="Sugiyama A."/>
            <person name="Takemoto M."/>
            <person name="Kawakami B."/>
            <person name="Yamazaki M."/>
            <person name="Watanabe K."/>
            <person name="Kumagai A."/>
            <person name="Itakura S."/>
            <person name="Fukuzumi Y."/>
            <person name="Fujimori Y."/>
            <person name="Komiyama M."/>
            <person name="Tashiro H."/>
            <person name="Tanigami A."/>
            <person name="Fujiwara T."/>
            <person name="Ono T."/>
            <person name="Yamada K."/>
            <person name="Fujii Y."/>
            <person name="Ozaki K."/>
            <person name="Hirao M."/>
            <person name="Ohmori Y."/>
            <person name="Kawabata A."/>
            <person name="Hikiji T."/>
            <person name="Kobatake N."/>
            <person name="Inagaki H."/>
            <person name="Ikema Y."/>
            <person name="Okamoto S."/>
            <person name="Okitani R."/>
            <person name="Kawakami T."/>
            <person name="Noguchi S."/>
            <person name="Itoh T."/>
            <person name="Shigeta K."/>
            <person name="Senba T."/>
            <person name="Matsumura K."/>
            <person name="Nakajima Y."/>
            <person name="Mizuno T."/>
            <person name="Morinaga M."/>
            <person name="Sasaki M."/>
            <person name="Togashi T."/>
            <person name="Oyama M."/>
            <person name="Hata H."/>
            <person name="Watanabe M."/>
            <person name="Komatsu T."/>
            <person name="Mizushima-Sugano J."/>
            <person name="Satoh T."/>
            <person name="Shirai Y."/>
            <person name="Takahashi Y."/>
            <person name="Nakagawa K."/>
            <person name="Okumura K."/>
            <person name="Nagase T."/>
            <person name="Nomura N."/>
            <person name="Kikuchi H."/>
            <person name="Masuho Y."/>
            <person name="Yamashita R."/>
            <person name="Nakai K."/>
            <person name="Yada T."/>
            <person name="Nakamura Y."/>
            <person name="Ohara O."/>
            <person name="Isogai T."/>
            <person name="Sugano S."/>
        </authorList>
    </citation>
    <scope>NUCLEOTIDE SEQUENCE [LARGE SCALE MRNA] (ISOFORM 1)</scope>
    <scope>VARIANT GLY-173</scope>
    <source>
        <tissue>Tongue</tissue>
    </source>
</reference>
<reference key="5">
    <citation type="journal article" date="2005" name="Nature">
        <title>Generation and annotation of the DNA sequences of human chromosomes 2 and 4.</title>
        <authorList>
            <person name="Hillier L.W."/>
            <person name="Graves T.A."/>
            <person name="Fulton R.S."/>
            <person name="Fulton L.A."/>
            <person name="Pepin K.H."/>
            <person name="Minx P."/>
            <person name="Wagner-McPherson C."/>
            <person name="Layman D."/>
            <person name="Wylie K."/>
            <person name="Sekhon M."/>
            <person name="Becker M.C."/>
            <person name="Fewell G.A."/>
            <person name="Delehaunty K.D."/>
            <person name="Miner T.L."/>
            <person name="Nash W.E."/>
            <person name="Kremitzki C."/>
            <person name="Oddy L."/>
            <person name="Du H."/>
            <person name="Sun H."/>
            <person name="Bradshaw-Cordum H."/>
            <person name="Ali J."/>
            <person name="Carter J."/>
            <person name="Cordes M."/>
            <person name="Harris A."/>
            <person name="Isak A."/>
            <person name="van Brunt A."/>
            <person name="Nguyen C."/>
            <person name="Du F."/>
            <person name="Courtney L."/>
            <person name="Kalicki J."/>
            <person name="Ozersky P."/>
            <person name="Abbott S."/>
            <person name="Armstrong J."/>
            <person name="Belter E.A."/>
            <person name="Caruso L."/>
            <person name="Cedroni M."/>
            <person name="Cotton M."/>
            <person name="Davidson T."/>
            <person name="Desai A."/>
            <person name="Elliott G."/>
            <person name="Erb T."/>
            <person name="Fronick C."/>
            <person name="Gaige T."/>
            <person name="Haakenson W."/>
            <person name="Haglund K."/>
            <person name="Holmes A."/>
            <person name="Harkins R."/>
            <person name="Kim K."/>
            <person name="Kruchowski S.S."/>
            <person name="Strong C.M."/>
            <person name="Grewal N."/>
            <person name="Goyea E."/>
            <person name="Hou S."/>
            <person name="Levy A."/>
            <person name="Martinka S."/>
            <person name="Mead K."/>
            <person name="McLellan M.D."/>
            <person name="Meyer R."/>
            <person name="Randall-Maher J."/>
            <person name="Tomlinson C."/>
            <person name="Dauphin-Kohlberg S."/>
            <person name="Kozlowicz-Reilly A."/>
            <person name="Shah N."/>
            <person name="Swearengen-Shahid S."/>
            <person name="Snider J."/>
            <person name="Strong J.T."/>
            <person name="Thompson J."/>
            <person name="Yoakum M."/>
            <person name="Leonard S."/>
            <person name="Pearman C."/>
            <person name="Trani L."/>
            <person name="Radionenko M."/>
            <person name="Waligorski J.E."/>
            <person name="Wang C."/>
            <person name="Rock S.M."/>
            <person name="Tin-Wollam A.-M."/>
            <person name="Maupin R."/>
            <person name="Latreille P."/>
            <person name="Wendl M.C."/>
            <person name="Yang S.-P."/>
            <person name="Pohl C."/>
            <person name="Wallis J.W."/>
            <person name="Spieth J."/>
            <person name="Bieri T.A."/>
            <person name="Berkowicz N."/>
            <person name="Nelson J.O."/>
            <person name="Osborne J."/>
            <person name="Ding L."/>
            <person name="Meyer R."/>
            <person name="Sabo A."/>
            <person name="Shotland Y."/>
            <person name="Sinha P."/>
            <person name="Wohldmann P.E."/>
            <person name="Cook L.L."/>
            <person name="Hickenbotham M.T."/>
            <person name="Eldred J."/>
            <person name="Williams D."/>
            <person name="Jones T.A."/>
            <person name="She X."/>
            <person name="Ciccarelli F.D."/>
            <person name="Izaurralde E."/>
            <person name="Taylor J."/>
            <person name="Schmutz J."/>
            <person name="Myers R.M."/>
            <person name="Cox D.R."/>
            <person name="Huang X."/>
            <person name="McPherson J.D."/>
            <person name="Mardis E.R."/>
            <person name="Clifton S.W."/>
            <person name="Warren W.C."/>
            <person name="Chinwalla A.T."/>
            <person name="Eddy S.R."/>
            <person name="Marra M.A."/>
            <person name="Ovcharenko I."/>
            <person name="Furey T.S."/>
            <person name="Miller W."/>
            <person name="Eichler E.E."/>
            <person name="Bork P."/>
            <person name="Suyama M."/>
            <person name="Torrents D."/>
            <person name="Waterston R.H."/>
            <person name="Wilson R.K."/>
        </authorList>
    </citation>
    <scope>NUCLEOTIDE SEQUENCE [LARGE SCALE GENOMIC DNA]</scope>
</reference>
<reference key="6">
    <citation type="submission" date="2002-01" db="EMBL/GenBank/DDBJ databases">
        <title>Identification of genetic polymorphisms within the human extrahepatic UGT1A8 gene.</title>
        <authorList>
            <person name="Strassburg C.P."/>
            <person name="Vogel A."/>
            <person name="Manns M.P."/>
        </authorList>
    </citation>
    <scope>NUCLEOTIDE SEQUENCE [GENOMIC DNA] OF 1-285</scope>
    <scope>VARIANTS ARG-132; ALA-154; GLY-173; ALA-202 AND LEU-212</scope>
</reference>
<reference key="7">
    <citation type="submission" date="2006-01" db="EMBL/GenBank/DDBJ databases">
        <authorList>
            <person name="Guillemette C."/>
            <person name="Levesque E."/>
            <person name="Girard H."/>
            <person name="Bernard O."/>
        </authorList>
    </citation>
    <scope>PARTIAL NUCLEOTIDE SEQUENCE [MRNA] (ISOFORM 2)</scope>
</reference>
<reference key="8">
    <citation type="journal article" date="2002" name="Mol. Pharmacol.">
        <title>Common human UGT1A polymorphisms and the altered metabolism of irinotecan active metabolite 7-ethyl-10-hydroxycamptothecin (SN-38).</title>
        <authorList>
            <person name="Gagne J.F."/>
            <person name="Montminy V."/>
            <person name="Belanger P."/>
            <person name="Journault K."/>
            <person name="Gaucher G."/>
            <person name="Guillemette C."/>
        </authorList>
    </citation>
    <scope>BIOPHYSICOCHEMICAL PROPERTIES</scope>
</reference>
<reference key="9">
    <citation type="journal article" date="2004" name="J. Clin. Endocrinol. Metab.">
        <title>Specificity and regioselectivity of the conjugation of estradiol, estrone, and their catecholestrogen and methoxyestrogen metabolites by human uridine diphospho-glucuronosyltransferases expressed in endometrium.</title>
        <authorList>
            <person name="Lepine J."/>
            <person name="Bernard O."/>
            <person name="Plante M."/>
            <person name="Tetu B."/>
            <person name="Pelletier G."/>
            <person name="Labrie F."/>
            <person name="Belanger A."/>
            <person name="Guillemette C."/>
        </authorList>
    </citation>
    <scope>FUNCTION (ISOFORM 1)</scope>
    <scope>CATALYTIC ACTIVITY</scope>
    <scope>BIOPHYSICOCHEMICAL PROPERTIES</scope>
</reference>
<reference key="10">
    <citation type="journal article" date="2005" name="Drug Metab. Dispos.">
        <title>Identification of the UDP-glucuronosyltransferase isoforms involved in mycophenolic acid phase II metabolism.</title>
        <authorList>
            <person name="Picard N."/>
            <person name="Ratanasavanh D."/>
            <person name="Premaud A."/>
            <person name="Le Meur Y."/>
            <person name="Marquet P."/>
        </authorList>
    </citation>
    <scope>BIOPHYSICOCHEMICAL PROPERTIES</scope>
</reference>
<reference key="11">
    <citation type="journal article" date="2006" name="Drug Metab. Dispos.">
        <title>Human UDP-glucuronosyltransferase, UGT1A8, glucuronidates dihydrotestosterone to a monoglucuronide and further to a structurally novel diglucuronide.</title>
        <authorList>
            <person name="Murai T."/>
            <person name="Samata N."/>
            <person name="Iwabuchi H."/>
            <person name="Ikeda T."/>
        </authorList>
    </citation>
    <scope>FUNCTION (ISOFORM 1)</scope>
    <scope>CATALYTIC ACTIVITY</scope>
    <scope>BIOPHYSICOCHEMICAL PROPERTIES</scope>
    <scope>SUBSTRATE SPECIFICITY</scope>
</reference>
<reference key="12">
    <citation type="journal article" date="2007" name="J. Biol. Chem.">
        <title>Oligomerization of the UDP-glucuronosyltransferase 1A proteins: homo- and heterodimerization analysis by fluorescence resonance energy transfer and co-immunoprecipitation.</title>
        <authorList>
            <person name="Operana T.N."/>
            <person name="Tukey R.H."/>
        </authorList>
    </citation>
    <scope>SUBUNIT</scope>
    <scope>SUBCELLULAR LOCATION</scope>
</reference>
<reference key="13">
    <citation type="journal article" date="2007" name="Mol. Pharm.">
        <title>Disposition of flavonoids via enteric recycling: enzyme stability affects characterization of prunetin glucuronidation across species, organs, and UGT isoforms.</title>
        <authorList>
            <person name="Joseph T.B."/>
            <person name="Wang S.W."/>
            <person name="Liu X."/>
            <person name="Kulkarni K.H."/>
            <person name="Wang J."/>
            <person name="Xu H."/>
            <person name="Hu M."/>
        </authorList>
    </citation>
    <scope>FUNCTION (ISOFORM 1)</scope>
    <scope>CATALYTIC ACTIVITY</scope>
    <scope>BIOPHYSICOCHEMICAL PROPERTIES</scope>
</reference>
<reference key="14">
    <citation type="journal article" date="2007" name="Pharmacogenet. Genomics">
        <title>Genetic diversity at the UGT1 locus is amplified by a novel 3' alternative splicing mechanism leading to nine additional UGT1A proteins that act as regulators of glucuronidation activity.</title>
        <authorList>
            <person name="Girard H."/>
            <person name="Levesque E."/>
            <person name="Bellemare J."/>
            <person name="Journault K."/>
            <person name="Caillier B."/>
            <person name="Guillemette C."/>
        </authorList>
    </citation>
    <scope>FUNCTION (ISOFORM 2)</scope>
    <scope>ALTERNATIVE SPLICING</scope>
    <scope>CATALYTIC ACTIVITY</scope>
    <scope>TISSUE SPECIFICITY</scope>
</reference>
<reference key="15">
    <citation type="journal article" date="2008" name="Biochem. Pharmacol.">
        <title>The human UDP-glucuronosyltransferase UGT1A3 is highly selective towards N2 in the tetrazole ring of losartan, candesartan, and zolarsartan.</title>
        <authorList>
            <person name="Alonen A."/>
            <person name="Finel M."/>
            <person name="Kostiainen R."/>
        </authorList>
    </citation>
    <scope>FUNCTION (ISOFORM 1)</scope>
    <scope>CATALYTIC ACTIVITY</scope>
</reference>
<reference key="16">
    <citation type="journal article" date="2008" name="Drug Metab. Dispos.">
        <title>The configuration of the 17-hydroxy group variably influences the glucuronidation of beta-estradiol and epiestradiol by human UDP-glucuronosyltransferases.</title>
        <authorList>
            <person name="Itaeaho K."/>
            <person name="Mackenzie P.I."/>
            <person name="Ikushiro S."/>
            <person name="Miners J.O."/>
            <person name="Finel M."/>
        </authorList>
    </citation>
    <scope>FUNCTION (ISOFORM 1)</scope>
    <scope>CATALYTIC ACTIVITY</scope>
    <scope>BIOPHYSICOCHEMICAL PROPERTIES</scope>
    <scope>SUBSTRATE SPECIFICITY</scope>
</reference>
<reference key="17">
    <citation type="journal article" date="2009" name="J. Proteome Res.">
        <title>Glycoproteomics analysis of human liver tissue by combination of multiple enzyme digestion and hydrazide chemistry.</title>
        <authorList>
            <person name="Chen R."/>
            <person name="Jiang X."/>
            <person name="Sun D."/>
            <person name="Han G."/>
            <person name="Wang F."/>
            <person name="Ye M."/>
            <person name="Wang L."/>
            <person name="Zou H."/>
        </authorList>
    </citation>
    <scope>GLYCOSYLATION [LARGE SCALE ANALYSIS] AT ASN-292 AND ASN-344</scope>
    <source>
        <tissue>Liver</tissue>
    </source>
</reference>
<reference key="18">
    <citation type="journal article" date="2009" name="Mol. Pharm.">
        <title>Structure and concentration changes affect characterization of UGT isoform-specific metabolism of isoflavones.</title>
        <authorList>
            <person name="Tang L."/>
            <person name="Singh R."/>
            <person name="Liu Z."/>
            <person name="Hu M."/>
        </authorList>
    </citation>
    <scope>FUNCTION (ISOFORM 1)</scope>
    <scope>CATALYTIC ACTIVITY</scope>
    <scope>BIOPHYSICOCHEMICAL PROPERTIES</scope>
</reference>
<reference key="19">
    <citation type="journal article" date="2010" name="Drug Metab. Dispos.">
        <title>Alternatively spliced products of the UGT1A gene interact with the enzymatically active proteins to inhibit glucuronosyltransferase activity in vitro.</title>
        <authorList>
            <person name="Bellemare J."/>
            <person name="Rouleau M."/>
            <person name="Girard H."/>
            <person name="Harvey M."/>
            <person name="Guillemette C."/>
        </authorList>
    </citation>
    <scope>FUNCTION (ISOFORM 2)</scope>
    <scope>CATALYTIC ACTIVITY</scope>
    <scope>BIOPHYSICOCHEMICAL PROPERTIES</scope>
    <scope>SUBUNIT</scope>
</reference>
<reference key="20">
    <citation type="journal article" date="2013" name="Drug Metab. Dispos.">
        <title>Regiospecificity and stereospecificity of human UDP-glucuronosyltransferases in the glucuronidation of estriol, 16-epiestriol, 17-epiestriol, and 13-epiestradiol.</title>
        <authorList>
            <person name="Sneitz N."/>
            <person name="Vahermo M."/>
            <person name="Mosorin J."/>
            <person name="Laakkonen L."/>
            <person name="Poirier D."/>
            <person name="Finel M."/>
        </authorList>
    </citation>
    <scope>FUNCTION (ISOFORM 1)</scope>
    <scope>CATALYTIC ACTIVITY</scope>
    <scope>BIOPHYSICOCHEMICAL PROPERTIES</scope>
</reference>
<reference key="21">
    <citation type="journal article" date="2009" name="Hum. Mutat.">
        <title>Analysis of inherited genetic variations at the UGT1 locus in the French-Canadian population.</title>
        <authorList>
            <person name="Menard V."/>
            <person name="Girard H."/>
            <person name="Harvey M."/>
            <person name="Perusse L."/>
            <person name="Guillemette C."/>
        </authorList>
    </citation>
    <scope>VARIANTS VAL-144; GLY-173; THR-231 AND TYR-277</scope>
</reference>
<reference key="22">
    <citation type="journal article" date="2011" name="Drug Metab. Pharmacokinet.">
        <title>Identification of the human UDP-glucuronosyltransferase isoforms involved in the glucuronidation of the phytochemical ferulic acid.</title>
        <authorList>
            <person name="Li X."/>
            <person name="Shang L."/>
            <person name="Wu Y."/>
            <person name="Abbas S."/>
            <person name="Li D."/>
            <person name="Netter P."/>
            <person name="Ouzzine M."/>
            <person name="Wang H."/>
            <person name="Magdalou J."/>
        </authorList>
    </citation>
    <scope>FUNCTION</scope>
    <scope>CATALYTIC ACTIVITY</scope>
    <scope>BIOPHYSICOCHEMICAL PROPERTIES</scope>
</reference>
<accession>Q9HAW9</accession>
<accession>B2R8S3</accession>
<accession>B8K290</accession>
<accession>O14928</accession>
<accession>Q8TEX4</accession>
<accession>Q8WTQ9</accession>
<accession>Q8WX85</accession>
<evidence type="ECO:0000255" key="1"/>
<evidence type="ECO:0000269" key="2">
    <source>
    </source>
</evidence>
<evidence type="ECO:0000269" key="3">
    <source>
    </source>
</evidence>
<evidence type="ECO:0000269" key="4">
    <source>
    </source>
</evidence>
<evidence type="ECO:0000269" key="5">
    <source>
    </source>
</evidence>
<evidence type="ECO:0000269" key="6">
    <source>
    </source>
</evidence>
<evidence type="ECO:0000269" key="7">
    <source>
    </source>
</evidence>
<evidence type="ECO:0000269" key="8">
    <source>
    </source>
</evidence>
<evidence type="ECO:0000269" key="9">
    <source>
    </source>
</evidence>
<evidence type="ECO:0000269" key="10">
    <source>
    </source>
</evidence>
<evidence type="ECO:0000269" key="11">
    <source>
    </source>
</evidence>
<evidence type="ECO:0000269" key="12">
    <source>
    </source>
</evidence>
<evidence type="ECO:0000269" key="13">
    <source>
    </source>
</evidence>
<evidence type="ECO:0000269" key="14">
    <source>
    </source>
</evidence>
<evidence type="ECO:0000269" key="15">
    <source>
    </source>
</evidence>
<evidence type="ECO:0000269" key="16">
    <source>
    </source>
</evidence>
<evidence type="ECO:0000269" key="17">
    <source>
    </source>
</evidence>
<evidence type="ECO:0000269" key="18">
    <source>
    </source>
</evidence>
<evidence type="ECO:0000269" key="19">
    <source>
    </source>
</evidence>
<evidence type="ECO:0000269" key="20">
    <source ref="6"/>
</evidence>
<evidence type="ECO:0000303" key="21">
    <source>
    </source>
</evidence>
<evidence type="ECO:0000303" key="22">
    <source>
    </source>
</evidence>
<evidence type="ECO:0000303" key="23">
    <source>
    </source>
</evidence>
<evidence type="ECO:0000303" key="24">
    <source>
    </source>
</evidence>
<evidence type="ECO:0000305" key="25"/>
<evidence type="ECO:0000305" key="26">
    <source>
    </source>
</evidence>
<evidence type="ECO:0000305" key="27">
    <source>
    </source>
</evidence>
<evidence type="ECO:0000305" key="28">
    <source>
    </source>
</evidence>
<evidence type="ECO:0000305" key="29">
    <source>
    </source>
</evidence>
<evidence type="ECO:0000305" key="30">
    <source>
    </source>
</evidence>
<evidence type="ECO:0000305" key="31">
    <source>
    </source>
</evidence>
<evidence type="ECO:0000305" key="32">
    <source>
    </source>
</evidence>
<evidence type="ECO:0000305" key="33">
    <source>
    </source>
</evidence>
<evidence type="ECO:0000305" key="34">
    <source>
    </source>
</evidence>
<evidence type="ECO:0000305" key="35">
    <source>
    </source>
</evidence>
<evidence type="ECO:0000305" key="36">
    <source>
    </source>
</evidence>
<evidence type="ECO:0000305" key="37">
    <source>
    </source>
</evidence>
<evidence type="ECO:0000312" key="38">
    <source>
        <dbReference type="HGNC" id="HGNC:12540"/>
    </source>
</evidence>
<protein>
    <recommendedName>
        <fullName evidence="21 23">UDP-glucuronosyltransferase 1A8</fullName>
        <shortName evidence="24">UGT1A8</shortName>
        <ecNumber evidence="6 7 10 11 12 16 18">2.4.1.17</ecNumber>
    </recommendedName>
    <alternativeName>
        <fullName>UDP-glucuronosyltransferase 1-8</fullName>
        <shortName>UDPGT 1-8</shortName>
        <shortName>UGT1*8</shortName>
        <shortName>UGT1-08</shortName>
        <shortName>UGT1.8</shortName>
    </alternativeName>
    <alternativeName>
        <fullName>UDP-glucuronosyltransferase 1-H</fullName>
        <shortName>UGT-1H</shortName>
        <shortName>UGT1H</shortName>
    </alternativeName>
</protein>
<dbReference type="EC" id="2.4.1.17" evidence="6 7 10 11 12 16 18"/>
<dbReference type="EMBL" id="AF030310">
    <property type="protein sequence ID" value="AAB84259.1"/>
    <property type="molecule type" value="mRNA"/>
</dbReference>
<dbReference type="EMBL" id="AF297093">
    <property type="protein sequence ID" value="AAG30416.1"/>
    <property type="molecule type" value="Genomic_DNA"/>
</dbReference>
<dbReference type="EMBL" id="AF462267">
    <property type="protein sequence ID" value="AAL75963.1"/>
    <property type="molecule type" value="mRNA"/>
</dbReference>
<dbReference type="EMBL" id="AF462268">
    <property type="protein sequence ID" value="AAL75964.1"/>
    <property type="molecule type" value="mRNA"/>
</dbReference>
<dbReference type="EMBL" id="AC006985">
    <property type="status" value="NOT_ANNOTATED_CDS"/>
    <property type="molecule type" value="Genomic_DNA"/>
</dbReference>
<dbReference type="EMBL" id="AC019072">
    <property type="status" value="NOT_ANNOTATED_CDS"/>
    <property type="molecule type" value="Genomic_DNA"/>
</dbReference>
<dbReference type="EMBL" id="AK313488">
    <property type="protein sequence ID" value="BAG36270.1"/>
    <property type="molecule type" value="mRNA"/>
</dbReference>
<dbReference type="EMBL" id="AF465198">
    <property type="protein sequence ID" value="AAL73506.1"/>
    <property type="molecule type" value="Genomic_DNA"/>
</dbReference>
<dbReference type="EMBL" id="AF465199">
    <property type="protein sequence ID" value="AAL73507.1"/>
    <property type="molecule type" value="Genomic_DNA"/>
</dbReference>
<dbReference type="EMBL" id="AF465200">
    <property type="protein sequence ID" value="AAL73508.1"/>
    <property type="molecule type" value="Genomic_DNA"/>
</dbReference>
<dbReference type="EMBL" id="DQ364251">
    <property type="protein sequence ID" value="ABC96775.1"/>
    <property type="molecule type" value="mRNA"/>
</dbReference>
<dbReference type="CCDS" id="CCDS33402.1">
    <molecule id="Q9HAW9-1"/>
</dbReference>
<dbReference type="RefSeq" id="NP_061949.3">
    <molecule id="Q9HAW9-1"/>
    <property type="nucleotide sequence ID" value="NM_019076.4"/>
</dbReference>
<dbReference type="SMR" id="Q9HAW9"/>
<dbReference type="BioGRID" id="120054">
    <property type="interactions" value="155"/>
</dbReference>
<dbReference type="FunCoup" id="Q9HAW9">
    <property type="interactions" value="333"/>
</dbReference>
<dbReference type="IntAct" id="Q9HAW9">
    <property type="interactions" value="8"/>
</dbReference>
<dbReference type="STRING" id="9606.ENSP00000362549"/>
<dbReference type="BindingDB" id="Q9HAW9"/>
<dbReference type="ChEMBL" id="CHEMBL1743318"/>
<dbReference type="DrugBank" id="DB00714">
    <property type="generic name" value="Apomorphine"/>
</dbReference>
<dbReference type="DrugBank" id="DB06401">
    <property type="generic name" value="Bazedoxifene"/>
</dbReference>
<dbReference type="DrugBank" id="DB14737">
    <property type="generic name" value="Cannabinol"/>
</dbReference>
<dbReference type="DrugBank" id="DB14635">
    <property type="generic name" value="Curcumin sulfate"/>
</dbReference>
<dbReference type="DrugBank" id="DB00861">
    <property type="generic name" value="Diflunisal"/>
</dbReference>
<dbReference type="DrugBank" id="DB12243">
    <property type="generic name" value="Edaravone"/>
</dbReference>
<dbReference type="DrugBank" id="DB11979">
    <property type="generic name" value="Elagolix"/>
</dbReference>
<dbReference type="DrugBank" id="DB09038">
    <property type="generic name" value="Empagliflozin"/>
</dbReference>
<dbReference type="DrugBank" id="DB00783">
    <property type="generic name" value="Estradiol"/>
</dbReference>
<dbReference type="DrugBank" id="DB00983">
    <property type="generic name" value="Formoterol"/>
</dbReference>
<dbReference type="DrugBank" id="DB11796">
    <property type="generic name" value="Fostemsavir"/>
</dbReference>
<dbReference type="DrugBank" id="DB12471">
    <property type="generic name" value="Ibrexafungerp"/>
</dbReference>
<dbReference type="DrugBank" id="DB16200">
    <property type="generic name" value="Iptacopan"/>
</dbReference>
<dbReference type="DrugBank" id="DB11633">
    <property type="generic name" value="Isavuconazole"/>
</dbReference>
<dbReference type="DrugBank" id="DB00555">
    <property type="generic name" value="Lamotrigine"/>
</dbReference>
<dbReference type="DrugBank" id="DB14009">
    <property type="generic name" value="Medical Cannabis"/>
</dbReference>
<dbReference type="DrugBank" id="DB05018">
    <property type="generic name" value="Migalastat"/>
</dbReference>
<dbReference type="DrugBank" id="DB08893">
    <property type="generic name" value="Mirabegron"/>
</dbReference>
<dbReference type="DrugBank" id="DB00295">
    <property type="generic name" value="Morphine"/>
</dbReference>
<dbReference type="DrugBank" id="DB00688">
    <property type="generic name" value="Mycophenolate mofetil"/>
</dbReference>
<dbReference type="DrugBank" id="DB01024">
    <property type="generic name" value="Mycophenolic acid"/>
</dbReference>
<dbReference type="DrugBank" id="DB06230">
    <property type="generic name" value="Nalmefene"/>
</dbReference>
<dbReference type="DrugBank" id="DB00788">
    <property type="generic name" value="Naproxen"/>
</dbReference>
<dbReference type="DrugBank" id="DB09079">
    <property type="generic name" value="Nintedanib"/>
</dbReference>
<dbReference type="DrugBank" id="DB00960">
    <property type="generic name" value="Pindolol"/>
</dbReference>
<dbReference type="DrugBank" id="DB17472">
    <property type="generic name" value="Pirtobrutinib"/>
</dbReference>
<dbReference type="DrugBank" id="DB00794">
    <property type="generic name" value="Primidone"/>
</dbReference>
<dbReference type="DrugBank" id="DB00818">
    <property type="generic name" value="Propofol"/>
</dbReference>
<dbReference type="DrugBank" id="DB00481">
    <property type="generic name" value="Raloxifene"/>
</dbReference>
<dbReference type="DrugBank" id="DB00503">
    <property type="generic name" value="Ritonavir"/>
</dbReference>
<dbReference type="DrugBank" id="DB00871">
    <property type="generic name" value="Terbutaline"/>
</dbReference>
<dbReference type="DrugBank" id="DB00197">
    <property type="generic name" value="Troglitazone"/>
</dbReference>
<dbReference type="DrugBank" id="DB12255">
    <property type="generic name" value="Vadadustat"/>
</dbReference>
<dbReference type="DrugBank" id="DB00313">
    <property type="generic name" value="Valproic acid"/>
</dbReference>
<dbReference type="SwissLipids" id="SLP:000001710"/>
<dbReference type="CAZy" id="GT1">
    <property type="family name" value="Glycosyltransferase Family 1"/>
</dbReference>
<dbReference type="GlyConnect" id="1880">
    <property type="glycosylation" value="2 N-Linked glycans (1 site)"/>
</dbReference>
<dbReference type="GlyCosmos" id="Q9HAW9">
    <property type="glycosylation" value="3 sites, 2 glycans"/>
</dbReference>
<dbReference type="GlyGen" id="Q9HAW9">
    <property type="glycosylation" value="3 sites, 2 N-linked glycans (1 site)"/>
</dbReference>
<dbReference type="iPTMnet" id="Q9HAW9"/>
<dbReference type="PhosphoSitePlus" id="Q9HAW9"/>
<dbReference type="BioMuta" id="UGT1A8"/>
<dbReference type="DMDM" id="29839637"/>
<dbReference type="jPOST" id="Q9HAW9"/>
<dbReference type="MassIVE" id="Q9HAW9"/>
<dbReference type="PaxDb" id="9606-ENSP00000362549"/>
<dbReference type="PeptideAtlas" id="Q9HAW9"/>
<dbReference type="ProteomicsDB" id="81456">
    <molecule id="Q9HAW9-1"/>
</dbReference>
<dbReference type="Antibodypedia" id="66865">
    <property type="antibodies" value="5 antibodies from 4 providers"/>
</dbReference>
<dbReference type="DNASU" id="54576"/>
<dbReference type="Ensembl" id="ENST00000373450.5">
    <molecule id="Q9HAW9-1"/>
    <property type="protein sequence ID" value="ENSP00000362549.4"/>
    <property type="gene ID" value="ENSG00000242366.4"/>
</dbReference>
<dbReference type="GeneID" id="54576"/>
<dbReference type="KEGG" id="hsa:54576"/>
<dbReference type="MANE-Select" id="ENST00000373450.5">
    <property type="protein sequence ID" value="ENSP00000362549.4"/>
    <property type="RefSeq nucleotide sequence ID" value="NM_019076.5"/>
    <property type="RefSeq protein sequence ID" value="NP_061949.3"/>
</dbReference>
<dbReference type="UCSC" id="uc002vup.4">
    <molecule id="Q9HAW9-1"/>
    <property type="organism name" value="human"/>
</dbReference>
<dbReference type="AGR" id="HGNC:12540"/>
<dbReference type="CTD" id="54576"/>
<dbReference type="DisGeNET" id="54576"/>
<dbReference type="GeneCards" id="UGT1A8"/>
<dbReference type="HGNC" id="HGNC:12540">
    <property type="gene designation" value="UGT1A8"/>
</dbReference>
<dbReference type="HPA" id="ENSG00000242366">
    <property type="expression patterns" value="Tissue enhanced (intestine, liver, urinary bladder)"/>
</dbReference>
<dbReference type="MalaCards" id="UGT1A8"/>
<dbReference type="MIM" id="191740">
    <property type="type" value="gene"/>
</dbReference>
<dbReference type="MIM" id="606433">
    <property type="type" value="gene"/>
</dbReference>
<dbReference type="neXtProt" id="NX_Q9HAW9"/>
<dbReference type="OpenTargets" id="ENSG00000242366"/>
<dbReference type="PharmGKB" id="PA37183"/>
<dbReference type="VEuPathDB" id="HostDB:ENSG00000242366"/>
<dbReference type="eggNOG" id="KOG1192">
    <property type="taxonomic scope" value="Eukaryota"/>
</dbReference>
<dbReference type="GeneTree" id="ENSGT00940000163976"/>
<dbReference type="HOGENOM" id="CLU_012949_0_2_1"/>
<dbReference type="InParanoid" id="Q9HAW9"/>
<dbReference type="OMA" id="YVPRFGM"/>
<dbReference type="OrthoDB" id="5835829at2759"/>
<dbReference type="PAN-GO" id="Q9HAW9">
    <property type="GO annotations" value="4 GO annotations based on evolutionary models"/>
</dbReference>
<dbReference type="PhylomeDB" id="Q9HAW9"/>
<dbReference type="TreeFam" id="TF315472"/>
<dbReference type="BioCyc" id="MetaCyc:HS10706-MONOMER"/>
<dbReference type="BRENDA" id="2.4.1.17">
    <property type="organism ID" value="2681"/>
</dbReference>
<dbReference type="PathwayCommons" id="Q9HAW9"/>
<dbReference type="Reactome" id="R-HSA-156588">
    <property type="pathway name" value="Glucuronidation"/>
</dbReference>
<dbReference type="Reactome" id="R-HSA-9749641">
    <property type="pathway name" value="Aspirin ADME"/>
</dbReference>
<dbReference type="SABIO-RK" id="Q9HAW9"/>
<dbReference type="SignaLink" id="Q9HAW9"/>
<dbReference type="SIGNOR" id="Q9HAW9"/>
<dbReference type="BioGRID-ORCS" id="54576">
    <property type="hits" value="23 hits in 1018 CRISPR screens"/>
</dbReference>
<dbReference type="ChiTaRS" id="UGT1A8">
    <property type="organism name" value="human"/>
</dbReference>
<dbReference type="GeneWiki" id="UGT1A8"/>
<dbReference type="GenomeRNAi" id="54576"/>
<dbReference type="Pharos" id="Q9HAW9">
    <property type="development level" value="Tbio"/>
</dbReference>
<dbReference type="PRO" id="PR:Q9HAW9"/>
<dbReference type="Proteomes" id="UP000005640">
    <property type="component" value="Chromosome 2"/>
</dbReference>
<dbReference type="RNAct" id="Q9HAW9">
    <property type="molecule type" value="protein"/>
</dbReference>
<dbReference type="Bgee" id="ENSG00000242366">
    <property type="expression patterns" value="Expressed in mucosa of transverse colon and 30 other cell types or tissues"/>
</dbReference>
<dbReference type="ExpressionAtlas" id="Q9HAW9">
    <property type="expression patterns" value="baseline and differential"/>
</dbReference>
<dbReference type="GO" id="GO:0005783">
    <property type="term" value="C:endoplasmic reticulum"/>
    <property type="evidence" value="ECO:0000314"/>
    <property type="project" value="UniProtKB"/>
</dbReference>
<dbReference type="GO" id="GO:0005789">
    <property type="term" value="C:endoplasmic reticulum membrane"/>
    <property type="evidence" value="ECO:0000303"/>
    <property type="project" value="BHF-UCL"/>
</dbReference>
<dbReference type="GO" id="GO:0019899">
    <property type="term" value="F:enzyme binding"/>
    <property type="evidence" value="ECO:0000353"/>
    <property type="project" value="BHF-UCL"/>
</dbReference>
<dbReference type="GO" id="GO:0004857">
    <property type="term" value="F:enzyme inhibitor activity"/>
    <property type="evidence" value="ECO:0000314"/>
    <property type="project" value="BHF-UCL"/>
</dbReference>
<dbReference type="GO" id="GO:0005504">
    <property type="term" value="F:fatty acid binding"/>
    <property type="evidence" value="ECO:0000314"/>
    <property type="project" value="BHF-UCL"/>
</dbReference>
<dbReference type="GO" id="GO:0015020">
    <property type="term" value="F:glucuronosyltransferase activity"/>
    <property type="evidence" value="ECO:0000314"/>
    <property type="project" value="BHF-UCL"/>
</dbReference>
<dbReference type="GO" id="GO:0046982">
    <property type="term" value="F:protein heterodimerization activity"/>
    <property type="evidence" value="ECO:0000353"/>
    <property type="project" value="BHF-UCL"/>
</dbReference>
<dbReference type="GO" id="GO:0042803">
    <property type="term" value="F:protein homodimerization activity"/>
    <property type="evidence" value="ECO:0000314"/>
    <property type="project" value="UniProtKB"/>
</dbReference>
<dbReference type="GO" id="GO:0001972">
    <property type="term" value="F:retinoic acid binding"/>
    <property type="evidence" value="ECO:0000305"/>
    <property type="project" value="BHF-UCL"/>
</dbReference>
<dbReference type="GO" id="GO:0005496">
    <property type="term" value="F:steroid binding"/>
    <property type="evidence" value="ECO:0000314"/>
    <property type="project" value="BHF-UCL"/>
</dbReference>
<dbReference type="GO" id="GO:0009804">
    <property type="term" value="P:coumarin metabolic process"/>
    <property type="evidence" value="ECO:0000305"/>
    <property type="project" value="BHF-UCL"/>
</dbReference>
<dbReference type="GO" id="GO:0006631">
    <property type="term" value="P:fatty acid metabolic process"/>
    <property type="evidence" value="ECO:0000314"/>
    <property type="project" value="BHF-UCL"/>
</dbReference>
<dbReference type="GO" id="GO:0051552">
    <property type="term" value="P:flavone metabolic process"/>
    <property type="evidence" value="ECO:0000314"/>
    <property type="project" value="BHF-UCL"/>
</dbReference>
<dbReference type="GO" id="GO:0009812">
    <property type="term" value="P:flavonoid metabolic process"/>
    <property type="evidence" value="ECO:0000314"/>
    <property type="project" value="BHF-UCL"/>
</dbReference>
<dbReference type="GO" id="GO:0001889">
    <property type="term" value="P:liver development"/>
    <property type="evidence" value="ECO:0000318"/>
    <property type="project" value="GO_Central"/>
</dbReference>
<dbReference type="GO" id="GO:0045922">
    <property type="term" value="P:negative regulation of fatty acid metabolic process"/>
    <property type="evidence" value="ECO:0000314"/>
    <property type="project" value="BHF-UCL"/>
</dbReference>
<dbReference type="GO" id="GO:0045939">
    <property type="term" value="P:negative regulation of steroid metabolic process"/>
    <property type="evidence" value="ECO:0000305"/>
    <property type="project" value="BHF-UCL"/>
</dbReference>
<dbReference type="GO" id="GO:0042573">
    <property type="term" value="P:retinoic acid metabolic process"/>
    <property type="evidence" value="ECO:0000305"/>
    <property type="project" value="BHF-UCL"/>
</dbReference>
<dbReference type="GO" id="GO:0008202">
    <property type="term" value="P:steroid metabolic process"/>
    <property type="evidence" value="ECO:0000314"/>
    <property type="project" value="UniProtKB"/>
</dbReference>
<dbReference type="GO" id="GO:0006805">
    <property type="term" value="P:xenobiotic metabolic process"/>
    <property type="evidence" value="ECO:0000314"/>
    <property type="project" value="BHF-UCL"/>
</dbReference>
<dbReference type="CDD" id="cd03784">
    <property type="entry name" value="GT1_Gtf-like"/>
    <property type="match status" value="1"/>
</dbReference>
<dbReference type="FunFam" id="3.40.50.2000:FF:000001">
    <property type="entry name" value="UDP-glucuronosyltransferase"/>
    <property type="match status" value="1"/>
</dbReference>
<dbReference type="FunFam" id="3.40.50.2000:FF:000092">
    <property type="entry name" value="UDP-glucuronosyltransferase"/>
    <property type="match status" value="1"/>
</dbReference>
<dbReference type="Gene3D" id="3.40.50.2000">
    <property type="entry name" value="Glycogen Phosphorylase B"/>
    <property type="match status" value="2"/>
</dbReference>
<dbReference type="InterPro" id="IPR050271">
    <property type="entry name" value="UDP-glycosyltransferase"/>
</dbReference>
<dbReference type="InterPro" id="IPR002213">
    <property type="entry name" value="UDP_glucos_trans"/>
</dbReference>
<dbReference type="InterPro" id="IPR035595">
    <property type="entry name" value="UDP_glycos_trans_CS"/>
</dbReference>
<dbReference type="PANTHER" id="PTHR48043">
    <property type="entry name" value="EG:EG0003.4 PROTEIN-RELATED"/>
    <property type="match status" value="1"/>
</dbReference>
<dbReference type="PANTHER" id="PTHR48043:SF161">
    <property type="entry name" value="UDP GLUCURONOSYLTRANSFERASE FAMILY 1 MEMBER A1"/>
    <property type="match status" value="1"/>
</dbReference>
<dbReference type="Pfam" id="PF00201">
    <property type="entry name" value="UDPGT"/>
    <property type="match status" value="1"/>
</dbReference>
<dbReference type="SUPFAM" id="SSF53756">
    <property type="entry name" value="UDP-Glycosyltransferase/glycogen phosphorylase"/>
    <property type="match status" value="1"/>
</dbReference>
<dbReference type="PROSITE" id="PS00375">
    <property type="entry name" value="UDPGT"/>
    <property type="match status" value="1"/>
</dbReference>
<gene>
    <name evidence="38" type="primary">UGT1A8</name>
    <name type="synonym">GNT1</name>
    <name type="synonym">UGT1</name>
</gene>
<comment type="function">
    <molecule>Isoform 1</molecule>
    <text evidence="5 6 7 9 10 11 12 15 17 18">UDP-glucuronosyltransferase (UGT) that catalyzes phase II biotransformation reactions in which lipophilic substrates are conjugated with glucuronic acid to increase the metabolite's water solubility, thereby facilitating excretion into either the urine or bile (PubMed:15472229, PubMed:16595710, PubMed:18004212, PubMed:18052087, PubMed:18674515, PubMed:18719240, PubMed:19545173, PubMed:23288867, PubMed:21422672). Essential for the elimination and detoxification of drugs, xenobiotics and endogenous compounds (PubMed:15472229, PubMed:16595710, PubMed:23288867). Catalyzes the glucuronidation of endogenous steroid hormones such as androgens and estrogens (PubMed:15472229, PubMed:16595710, PubMed:18719240, PubMed:23288867). Produces dihydrotestosterone (DHT) diglucuronide from the DHT after two subsequent glucoronidation steps (PubMed:16595710). Involved in the glucuronidation of the phytochemical ferulic acid at the phenolic or the carboxylic acid group (PubMed:21422672). Also catalyzes the glucuronidation of the isoflavones genistein, daidzein, glycitein, formononetin, biochanin A and prunetin, which are phytoestrogens with anticancer and cardiovascular properties (PubMed:18052087, PubMed:19545173). Involved in the glucuronidation of the AGTR1 angiotensin receptor antagonist caderastan, a drug which can inhibit the effect of angiotensin II (PubMed:18674515). Also metabolizes mycophenolate, an immunosuppressive agent (PubMed:15470161, PubMed:18004212).</text>
</comment>
<comment type="function">
    <molecule>Isoform 2</molecule>
    <text evidence="9 16">Lacks UGT glucuronidation activity but acts as a negative regulator of isoform 1.</text>
</comment>
<comment type="catalytic activity">
    <reaction evidence="6 7 9 10 11 12 15 16 18">
        <text>glucuronate acceptor + UDP-alpha-D-glucuronate = acceptor beta-D-glucuronoside + UDP + H(+)</text>
        <dbReference type="Rhea" id="RHEA:21032"/>
        <dbReference type="ChEBI" id="CHEBI:15378"/>
        <dbReference type="ChEBI" id="CHEBI:58052"/>
        <dbReference type="ChEBI" id="CHEBI:58223"/>
        <dbReference type="ChEBI" id="CHEBI:132367"/>
        <dbReference type="ChEBI" id="CHEBI:132368"/>
        <dbReference type="EC" id="2.4.1.17"/>
    </reaction>
    <physiologicalReaction direction="left-to-right" evidence="17 27 28 30 31 32 33 34 35 37">
        <dbReference type="Rhea" id="RHEA:21033"/>
    </physiologicalReaction>
</comment>
<comment type="catalytic activity">
    <reaction evidence="6 12 18">
        <text>17beta-estradiol + UDP-alpha-D-glucuronate = 17beta-estradiol 3-O-(beta-D-glucuronate) + UDP + H(+)</text>
        <dbReference type="Rhea" id="RHEA:52460"/>
        <dbReference type="ChEBI" id="CHEBI:15378"/>
        <dbReference type="ChEBI" id="CHEBI:16469"/>
        <dbReference type="ChEBI" id="CHEBI:58052"/>
        <dbReference type="ChEBI" id="CHEBI:58223"/>
        <dbReference type="ChEBI" id="CHEBI:136641"/>
    </reaction>
    <physiologicalReaction direction="left-to-right" evidence="27 33 37">
        <dbReference type="Rhea" id="RHEA:52461"/>
    </physiologicalReaction>
</comment>
<comment type="catalytic activity">
    <reaction evidence="12">
        <text>17alpha-estradiol + UDP-alpha-D-glucuronate = 17alpha-estradiol 3-O-(beta-D-glucuronate) + UDP + H(+)</text>
        <dbReference type="Rhea" id="RHEA:52868"/>
        <dbReference type="ChEBI" id="CHEBI:15378"/>
        <dbReference type="ChEBI" id="CHEBI:17160"/>
        <dbReference type="ChEBI" id="CHEBI:57529"/>
        <dbReference type="ChEBI" id="CHEBI:58052"/>
        <dbReference type="ChEBI" id="CHEBI:58223"/>
    </reaction>
    <physiologicalReaction direction="left-to-right" evidence="33">
        <dbReference type="Rhea" id="RHEA:52869"/>
    </physiologicalReaction>
</comment>
<comment type="catalytic activity">
    <reaction evidence="6">
        <text>estrone + UDP-alpha-D-glucuronate = estrone 3-O-(beta-D-glucuronate) + UDP + H(+)</text>
        <dbReference type="Rhea" id="RHEA:52476"/>
        <dbReference type="ChEBI" id="CHEBI:15378"/>
        <dbReference type="ChEBI" id="CHEBI:17263"/>
        <dbReference type="ChEBI" id="CHEBI:58052"/>
        <dbReference type="ChEBI" id="CHEBI:58223"/>
        <dbReference type="ChEBI" id="CHEBI:136634"/>
    </reaction>
    <physiologicalReaction direction="left-to-right" evidence="27">
        <dbReference type="Rhea" id="RHEA:52477"/>
    </physiologicalReaction>
</comment>
<comment type="catalytic activity">
    <reaction evidence="18">
        <text>16alpha,17alpha-estriol + UDP-alpha-D-glucuronate = 16alpha,17alpha-estriol 3-O-(beta-D-glucuronate) + UDP + H(+)</text>
        <dbReference type="Rhea" id="RHEA:52924"/>
        <dbReference type="ChEBI" id="CHEBI:15378"/>
        <dbReference type="ChEBI" id="CHEBI:42156"/>
        <dbReference type="ChEBI" id="CHEBI:58052"/>
        <dbReference type="ChEBI" id="CHEBI:58223"/>
        <dbReference type="ChEBI" id="CHEBI:136882"/>
    </reaction>
    <physiologicalReaction direction="left-to-right" evidence="37">
        <dbReference type="Rhea" id="RHEA:52925"/>
    </physiologicalReaction>
</comment>
<comment type="catalytic activity">
    <reaction evidence="6">
        <text>2-hydroxy-17beta-estradiol + UDP-alpha-D-glucuronate = 2-hydroxy-17beta-estradiol 3-O-(beta-D-glucuronate) + UDP + H(+)</text>
        <dbReference type="Rhea" id="RHEA:53004"/>
        <dbReference type="ChEBI" id="CHEBI:15378"/>
        <dbReference type="ChEBI" id="CHEBI:28744"/>
        <dbReference type="ChEBI" id="CHEBI:58052"/>
        <dbReference type="ChEBI" id="CHEBI:58223"/>
        <dbReference type="ChEBI" id="CHEBI:136931"/>
    </reaction>
    <physiologicalReaction direction="left-to-right" evidence="27">
        <dbReference type="Rhea" id="RHEA:53005"/>
    </physiologicalReaction>
</comment>
<comment type="catalytic activity">
    <reaction evidence="6">
        <text>2-hydroxy-17beta-estradiol + UDP-alpha-D-glucuronate = 17beta-estradiol 2-O-(beta-D-glucuronate) + UDP + H(+)</text>
        <dbReference type="Rhea" id="RHEA:53032"/>
        <dbReference type="ChEBI" id="CHEBI:15378"/>
        <dbReference type="ChEBI" id="CHEBI:28744"/>
        <dbReference type="ChEBI" id="CHEBI:58052"/>
        <dbReference type="ChEBI" id="CHEBI:58223"/>
        <dbReference type="ChEBI" id="CHEBI:136933"/>
    </reaction>
    <physiologicalReaction direction="left-to-right" evidence="27">
        <dbReference type="Rhea" id="RHEA:53033"/>
    </physiologicalReaction>
</comment>
<comment type="catalytic activity">
    <reaction evidence="6">
        <text>2-hydroxyestrone + UDP-alpha-D-glucuronate = 2-hydroxyestrone 3-O-(beta-D-glucuronate) + UDP + H(+)</text>
        <dbReference type="Rhea" id="RHEA:53048"/>
        <dbReference type="ChEBI" id="CHEBI:1156"/>
        <dbReference type="ChEBI" id="CHEBI:15378"/>
        <dbReference type="ChEBI" id="CHEBI:58052"/>
        <dbReference type="ChEBI" id="CHEBI:58223"/>
        <dbReference type="ChEBI" id="CHEBI:136967"/>
    </reaction>
    <physiologicalReaction direction="left-to-right" evidence="27">
        <dbReference type="Rhea" id="RHEA:53049"/>
    </physiologicalReaction>
</comment>
<comment type="catalytic activity">
    <reaction evidence="6">
        <text>4-hydroxy-17beta-estradiol + UDP-alpha-D-glucuronate = 4-hydroxy-17beta-estradiol 3-O-(beta-D-glucuronate) + UDP + H(+)</text>
        <dbReference type="Rhea" id="RHEA:53036"/>
        <dbReference type="ChEBI" id="CHEBI:15378"/>
        <dbReference type="ChEBI" id="CHEBI:58052"/>
        <dbReference type="ChEBI" id="CHEBI:58223"/>
        <dbReference type="ChEBI" id="CHEBI:62845"/>
        <dbReference type="ChEBI" id="CHEBI:136936"/>
    </reaction>
    <physiologicalReaction direction="left-to-right" evidence="27">
        <dbReference type="Rhea" id="RHEA:53037"/>
    </physiologicalReaction>
</comment>
<comment type="catalytic activity">
    <reaction evidence="6">
        <text>4-hydroxy-17beta-estradiol + UDP-alpha-D-glucuronate = 17beta-estradiol 4-O-(beta-D-glucuronate) + UDP + H(+)</text>
        <dbReference type="Rhea" id="RHEA:53040"/>
        <dbReference type="ChEBI" id="CHEBI:15378"/>
        <dbReference type="ChEBI" id="CHEBI:58052"/>
        <dbReference type="ChEBI" id="CHEBI:58223"/>
        <dbReference type="ChEBI" id="CHEBI:62845"/>
        <dbReference type="ChEBI" id="CHEBI:136937"/>
    </reaction>
    <physiologicalReaction direction="left-to-right" evidence="27">
        <dbReference type="Rhea" id="RHEA:53041"/>
    </physiologicalReaction>
</comment>
<comment type="catalytic activity">
    <reaction evidence="6">
        <text>4-hydroxyestrone + UDP-alpha-D-glucuronate = 4-hydroxyestrone 3-O-(beta-D-glucuronate) + UDP + H(+)</text>
        <dbReference type="Rhea" id="RHEA:53052"/>
        <dbReference type="ChEBI" id="CHEBI:15378"/>
        <dbReference type="ChEBI" id="CHEBI:58052"/>
        <dbReference type="ChEBI" id="CHEBI:58223"/>
        <dbReference type="ChEBI" id="CHEBI:87602"/>
        <dbReference type="ChEBI" id="CHEBI:136969"/>
    </reaction>
    <physiologicalReaction direction="left-to-right" evidence="27">
        <dbReference type="Rhea" id="RHEA:53053"/>
    </physiologicalReaction>
</comment>
<comment type="catalytic activity">
    <reaction evidence="6">
        <text>4-hydroxyestrone + UDP-alpha-D-glucuronate = estrone 4-O-(beta-D-glucuronate) + UDP + H(+)</text>
        <dbReference type="Rhea" id="RHEA:53060"/>
        <dbReference type="ChEBI" id="CHEBI:15378"/>
        <dbReference type="ChEBI" id="CHEBI:58052"/>
        <dbReference type="ChEBI" id="CHEBI:58223"/>
        <dbReference type="ChEBI" id="CHEBI:87602"/>
        <dbReference type="ChEBI" id="CHEBI:136970"/>
    </reaction>
    <physiologicalReaction direction="left-to-right" evidence="27">
        <dbReference type="Rhea" id="RHEA:53061"/>
    </physiologicalReaction>
</comment>
<comment type="catalytic activity">
    <reaction evidence="6">
        <text>2-methoxy-17beta-estradiol + UDP-alpha-D-glucuronate = 2-methoxy-17beta-estradiol 3-O-(beta-D-glucuronate) + UDP + H(+)</text>
        <dbReference type="Rhea" id="RHEA:53072"/>
        <dbReference type="ChEBI" id="CHEBI:15378"/>
        <dbReference type="ChEBI" id="CHEBI:28955"/>
        <dbReference type="ChEBI" id="CHEBI:58052"/>
        <dbReference type="ChEBI" id="CHEBI:58223"/>
        <dbReference type="ChEBI" id="CHEBI:136974"/>
    </reaction>
    <physiologicalReaction direction="left-to-right" evidence="27">
        <dbReference type="Rhea" id="RHEA:53073"/>
    </physiologicalReaction>
</comment>
<comment type="catalytic activity">
    <reaction evidence="6">
        <text>2-methoxyestrone + UDP-alpha-D-glucuronate = 2-methoxyestrone 3-O-(beta-D-glucuronate) + UDP + H(+)</text>
        <dbReference type="Rhea" id="RHEA:53064"/>
        <dbReference type="ChEBI" id="CHEBI:1189"/>
        <dbReference type="ChEBI" id="CHEBI:15378"/>
        <dbReference type="ChEBI" id="CHEBI:58052"/>
        <dbReference type="ChEBI" id="CHEBI:58223"/>
        <dbReference type="ChEBI" id="CHEBI:136971"/>
    </reaction>
    <physiologicalReaction direction="left-to-right" evidence="27">
        <dbReference type="Rhea" id="RHEA:53065"/>
    </physiologicalReaction>
</comment>
<comment type="catalytic activity">
    <reaction evidence="6">
        <text>4-methoxy-17beta-estradiol + UDP-alpha-D-glucuronate = 4-methoxy-17beta-estradiol 3-O-(beta-D-glucuronate) + UDP + H(+)</text>
        <dbReference type="Rhea" id="RHEA:53080"/>
        <dbReference type="ChEBI" id="CHEBI:15378"/>
        <dbReference type="ChEBI" id="CHEBI:58052"/>
        <dbReference type="ChEBI" id="CHEBI:58223"/>
        <dbReference type="ChEBI" id="CHEBI:136975"/>
        <dbReference type="ChEBI" id="CHEBI:136976"/>
    </reaction>
    <physiologicalReaction direction="left-to-right" evidence="27">
        <dbReference type="Rhea" id="RHEA:53081"/>
    </physiologicalReaction>
</comment>
<comment type="catalytic activity">
    <reaction evidence="6">
        <text>4-methoxyestrone + UDP-alpha-D-glucuronate = 4-methoxyestrone 3-O-(beta-D-glucuronate) + UDP + H(+)</text>
        <dbReference type="Rhea" id="RHEA:53068"/>
        <dbReference type="ChEBI" id="CHEBI:15378"/>
        <dbReference type="ChEBI" id="CHEBI:58052"/>
        <dbReference type="ChEBI" id="CHEBI:58223"/>
        <dbReference type="ChEBI" id="CHEBI:136972"/>
        <dbReference type="ChEBI" id="CHEBI:136973"/>
    </reaction>
    <physiologicalReaction direction="left-to-right" evidence="27">
        <dbReference type="Rhea" id="RHEA:53069"/>
    </physiologicalReaction>
</comment>
<comment type="catalytic activity">
    <reaction evidence="7">
        <text>17beta-hydroxy-5alpha-androstan-3-one + UDP-alpha-D-glucuronate = 5alpha-dihydrotestosterone 17-O-(beta-D-glucuronate) + UDP + H(+)</text>
        <dbReference type="Rhea" id="RHEA:53000"/>
        <dbReference type="ChEBI" id="CHEBI:15378"/>
        <dbReference type="ChEBI" id="CHEBI:16330"/>
        <dbReference type="ChEBI" id="CHEBI:58052"/>
        <dbReference type="ChEBI" id="CHEBI:58223"/>
        <dbReference type="ChEBI" id="CHEBI:136914"/>
    </reaction>
    <physiologicalReaction direction="left-to-right" evidence="28">
        <dbReference type="Rhea" id="RHEA:53001"/>
    </physiologicalReaction>
</comment>
<comment type="catalytic activity">
    <reaction evidence="7">
        <text>5alpha-dihydrotestosterone 17-O-(beta-D-glucuronate) + UDP-alpha-D-glucuronate = 5alpha-dihydrotestosterone 17-O-[beta-D-glucuronosyl-(1-&gt;2)-glucuronate] + UDP + H(+)</text>
        <dbReference type="Rhea" id="RHEA:53388"/>
        <dbReference type="ChEBI" id="CHEBI:15378"/>
        <dbReference type="ChEBI" id="CHEBI:58052"/>
        <dbReference type="ChEBI" id="CHEBI:58223"/>
        <dbReference type="ChEBI" id="CHEBI:136914"/>
        <dbReference type="ChEBI" id="CHEBI:136916"/>
    </reaction>
    <physiologicalReaction direction="left-to-right" evidence="28">
        <dbReference type="Rhea" id="RHEA:53389"/>
    </physiologicalReaction>
</comment>
<comment type="catalytic activity">
    <reaction evidence="10">
        <text>prunetin + UDP-alpha-D-glucuronate = prunetin-4'-O-beta-D-glucuronide + UDP</text>
        <dbReference type="Rhea" id="RHEA:63588"/>
        <dbReference type="ChEBI" id="CHEBI:58052"/>
        <dbReference type="ChEBI" id="CHEBI:58223"/>
        <dbReference type="ChEBI" id="CHEBI:147403"/>
        <dbReference type="ChEBI" id="CHEBI:147404"/>
    </reaction>
    <physiologicalReaction direction="left-to-right" evidence="31">
        <dbReference type="Rhea" id="RHEA:63589"/>
    </physiologicalReaction>
</comment>
<comment type="catalytic activity">
    <reaction evidence="10">
        <text>prunetin + UDP-alpha-D-glucuronate = prunetin-5-O-beta-D-glucuronide + UDP</text>
        <dbReference type="Rhea" id="RHEA:63612"/>
        <dbReference type="ChEBI" id="CHEBI:58052"/>
        <dbReference type="ChEBI" id="CHEBI:58223"/>
        <dbReference type="ChEBI" id="CHEBI:147403"/>
        <dbReference type="ChEBI" id="CHEBI:147405"/>
    </reaction>
    <physiologicalReaction direction="left-to-right" evidence="31">
        <dbReference type="Rhea" id="RHEA:63613"/>
    </physiologicalReaction>
</comment>
<comment type="catalytic activity">
    <reaction evidence="11">
        <text>candesartan + UDP-alpha-D-glucuronate = candesartan O-beta-D-glucuronoside + UDP</text>
        <dbReference type="Rhea" id="RHEA:63724"/>
        <dbReference type="ChEBI" id="CHEBI:58052"/>
        <dbReference type="ChEBI" id="CHEBI:58223"/>
        <dbReference type="ChEBI" id="CHEBI:149509"/>
        <dbReference type="ChEBI" id="CHEBI:149522"/>
    </reaction>
    <physiologicalReaction direction="left-to-right" evidence="32">
        <dbReference type="Rhea" id="RHEA:63725"/>
    </physiologicalReaction>
</comment>
<comment type="catalytic activity">
    <reaction evidence="5 9 16">
        <text>mycophenolate + UDP-alpha-D-glucuronate = mycophenolate 7-O-beta-D-glucuronide + UDP + H(+)</text>
        <dbReference type="Rhea" id="RHEA:63704"/>
        <dbReference type="ChEBI" id="CHEBI:15378"/>
        <dbReference type="ChEBI" id="CHEBI:58052"/>
        <dbReference type="ChEBI" id="CHEBI:58223"/>
        <dbReference type="ChEBI" id="CHEBI:62932"/>
        <dbReference type="ChEBI" id="CHEBI:149486"/>
    </reaction>
    <physiologicalReaction direction="left-to-right" evidence="26 30 35">
        <dbReference type="Rhea" id="RHEA:63705"/>
    </physiologicalReaction>
</comment>
<comment type="catalytic activity">
    <reaction evidence="17">
        <text>(E)-ferulate + UDP-alpha-D-glucuronate = (E)-4-O-(beta-D-glucuronosyl)-ferulate + UDP + H(+)</text>
        <dbReference type="Rhea" id="RHEA:79951"/>
        <dbReference type="ChEBI" id="CHEBI:15378"/>
        <dbReference type="ChEBI" id="CHEBI:29749"/>
        <dbReference type="ChEBI" id="CHEBI:58052"/>
        <dbReference type="ChEBI" id="CHEBI:58223"/>
        <dbReference type="ChEBI" id="CHEBI:231331"/>
    </reaction>
    <physiologicalReaction direction="left-to-right" evidence="36">
        <dbReference type="Rhea" id="RHEA:79952"/>
    </physiologicalReaction>
</comment>
<comment type="catalytic activity">
    <reaction evidence="17">
        <text>(E)-ferulate + UDP-alpha-D-glucuronate = (E)-ferulic acid beta-D-glucuronate ester + UDP</text>
        <dbReference type="Rhea" id="RHEA:79955"/>
        <dbReference type="ChEBI" id="CHEBI:29749"/>
        <dbReference type="ChEBI" id="CHEBI:58052"/>
        <dbReference type="ChEBI" id="CHEBI:58223"/>
        <dbReference type="ChEBI" id="CHEBI:231332"/>
    </reaction>
    <physiologicalReaction direction="left-to-right" evidence="36">
        <dbReference type="Rhea" id="RHEA:79956"/>
    </physiologicalReaction>
</comment>
<comment type="biophysicochemical properties">
    <kinetics>
        <KM evidence="12">61.7 uM for 17beta-estradiol/estradiol (when assaying glucuronidation at position 3)</KM>
        <KM evidence="12">10 uM for 17beta-estradiol/estradiol (when assaying glucuronidation at position 17)</KM>
        <KM evidence="6">38 uM for 17beta-estradiol/estradiol (when assaying glucuronidation at position 3)</KM>
        <KM evidence="6">55 uM for estrone (when assaying glucuronidation at position 3)</KM>
        <KM evidence="6">20 uM for 2-hydroxy-17beta-estradiol (when assaying glucuronidation at position 3)</KM>
        <KM evidence="6">102 uM for 2-hydroxy-17beta-estradiol (when assaying glucuronidation at position 2)</KM>
        <KM evidence="6">40 uM for 2-hydroxy-estrone (when assaying glucuronidation at position 3)</KM>
        <KM evidence="6">52 uM for 2-hydroxy-estrone (when assaying glucuronidation at position 2)</KM>
        <KM evidence="6">118 uM for 4-hydroxy-17beta-estradiol (when assaying glucuronidation at position 3)</KM>
        <KM evidence="6">105 uM for 4-hydroxy-17beta-estradiol (when assaying glucuronidation at position 4)</KM>
        <KM evidence="6">184 uM for 4-hydroxy-estrone (when assaying glucuronidation at position 3)</KM>
        <KM evidence="6">431 uM for 4-hydroxy-estrone (when assaying glucuronidation at position 4)</KM>
        <KM evidence="6">66 uM for 2-methoxy-17beta-estradiol (when assaying glucuronidation at position 3)</KM>
        <KM evidence="6">69 uM for 2-methoxy-estrone (when assaying glucuronidation at position 3)</KM>
        <KM evidence="6">8 uM for 4-methoxy-17beta-estradiol(when assaying glucuronidation at position 3)</KM>
        <KM evidence="6">111 uM for 4-methoxy-estrone (when assaying glucuronidation at position 3)</KM>
        <KM evidence="15">1.25 uM for genistein</KM>
        <KM evidence="7">382.3 uM for 17beta-hydroxy-5alpha-androstan-3-one (when assaying glucuronidation at position 17)</KM>
        <KM evidence="17">8700 uM for (E)-ferulate (when assaying glucuronidation at the phenolic group)</KM>
        <KM evidence="17">4170 uM for (E)-ferulate (when assaying glucuronidation at the carboxylic acid group)</KM>
        <KM evidence="5">1390 uM for mycophenolate (when assaying glucuronidation at position 7)</KM>
        <KM evidence="3">20.3 uM for SN-38 (when assaying glucuronidation at position 10)</KM>
        <KM evidence="16">128 uM for mycophenolate (when assaying glucuronidation at position 7)</KM>
        <Vmax evidence="12">200.0 pmol/min/mg enzyme for the formation of 17alpha-estradiol 3-O-(beta-D-glucuronate)</Vmax>
        <Vmax evidence="12">217.0 pmol/min/mg enzyme for the formation of 17beta-estradiol 3-O-(beta-D-glucuronate)</Vmax>
        <Vmax evidence="12">4.75 pmol/min/mg enzyme for the formation of 17beta-estradiol 17-O-(beta-D-glucuronate)</Vmax>
        <Vmax evidence="6">195.0 pmol/min/mg enzyme for the formation of 17beta-estradiol 3-O-(beta-D-glucuronate)</Vmax>
        <Vmax evidence="6">142.0 pmol/min/mg enzyme for the formation of estrone 3-O-(beta-D-glucuronate)</Vmax>
        <Vmax evidence="6">188.0 pmol/min/mg enzyme for the formation of 2-hydroxy-17beta-estradiol 3-O-(beta-D-glucuronate)</Vmax>
        <Vmax evidence="6">126.0 pmol/min/mg enzyme for the formation of 2-hydroxy-17beta-estradiol 2-O-(beta-D-glucuronate)</Vmax>
        <Vmax evidence="6">88.0 pmol/min/mg enzyme for the formation of 2-hydroxy-estrone 3-O-(beta-D-glucuronate)</Vmax>
        <Vmax evidence="6">38.0 pmol/min/mg enzyme for the formation of 2-hydroxy-estrone2-O-(beta-D-glucuronate)</Vmax>
        <Vmax evidence="6">119.0 pmol/min/mg enzyme for the formation of 4-hydroxy-17beta-estradiol 3-O-(beta-D-glucuronate)</Vmax>
        <Vmax evidence="6">4723.0 pmol/min/mg enzyme for the formation of 4-hydroxy-17beta-estradiol 4-O-(beta-D-glucuronate)</Vmax>
        <Vmax evidence="6">1975.0 pmol/min/mg enzyme for the formation of 4-hydroxy-estrone 3-O-(beta-D-glucuronate)</Vmax>
        <Vmax evidence="6">1538.0 pmol/min/mg enzyme for the formation of 4-hydroxy-estrone 4-O-(beta-D-glucuronate)</Vmax>
        <Vmax evidence="6">1050.0 pmol/min/mg enzyme for the formation of 2-methoxy-17beta-estradiol 3-O-(beta-D-glucuronate)</Vmax>
        <Vmax evidence="6">749.0 pmol/min/mg enzyme for the formation of 2-methoxyestrone 3-O-(beta-D-glucuronate)</Vmax>
        <Vmax evidence="6">218.0 pmol/min/mg enzyme for the formation of 4-methoxy-17beta-estradiol 3-O-(beta-D-glucuronate)</Vmax>
        <Vmax evidence="6">275.0 pmol/min/mg enzyme for the formation of 4-methoxyestrone 3-O-(beta-D-glucuronate)</Vmax>
        <Vmax evidence="18">3.3 pmol/min/mg enzyme for the formation of 16alpha,17beta-estriol 3-O-(beta-D-glucuronate)</Vmax>
        <Vmax evidence="18">16.3 pmol/min/mg enzyme for the formation of 16beta,17beta-estriol 3-O-(beta-D-glucuronate)</Vmax>
        <Vmax evidence="18">78.6 pmol/min/mg enzyme for the formation of 16alpha,17alpha-estriol 3-O-(beta-D-glucuronate)</Vmax>
        <Vmax evidence="18">47.9 pmol/min/mg enzyme for the formation of 17beta-estradiol 3-O-(beta-D-glucuronate)</Vmax>
        <Vmax evidence="18">15.6 pmol/min/mg enzyme for the formation of 17alpha-estradiol 3-O-(beta-D-glucuronate)</Vmax>
        <Vmax evidence="10">0.24 nmol/min/mg enzyme for the formation of prunetin-5-O-(beta-D-glucuronoside)</Vmax>
        <Vmax evidence="10">0.11 nmol/min/mg enzyme for the formation of prunetin-4'-O-(beta-D-glucuronoside)</Vmax>
        <Vmax evidence="15">2.24 nmol/min/mg enzyme for the formation of genistein glucuronide</Vmax>
        <Vmax evidence="7">0.047 pmol/min/mg enzyme with 5alpha-dihydrotestosterone 17-O-(beta-D-glucuronate) as substrate, for the formation of 5alpha-dihydrotestosterone 17-O-[beta-D-glucuronosyl-(1-&gt;2)-glucuronate]</Vmax>
        <Vmax evidence="7">0.107 pmol/min/mg enzyme with 17beta-hydroxy-5alpha-androstan-3-one as substrate, for the formation of 5alpha-dihydrotestosterone 17-O-[beta-D-glucuronosyl-(1-&gt;2)-glucuronate]</Vmax>
        <Vmax evidence="17">301.6 pmol/min/mg enzyme for the formation of (E)-4-O-(beta-D-glucuronosyl)-ferulate</Vmax>
        <Vmax evidence="17">3.8 pmol/min/mg enzyme for the formation of (E)-ferulic acid beta-D-glucuronate ester</Vmax>
        <Vmax evidence="16">1.9 nmol/min/mg enzyme for the formation of mycophenolate 7-O-glucuronide</Vmax>
        <Vmax evidence="5">7.27 nmol/min/mg enzyme for the formation of mycophenolate 7-O-glucuronide</Vmax>
        <Vmax evidence="3">5.0 pmol/min/mg enzyme for the formation of SN-38 glucuronide</Vmax>
        <text evidence="26 28 31 34">Some kinetic parameters were assessed using commercial enzymes, which may represent a mix of both active and inactive protein forms, and therefore modify the kinetic values.</text>
    </kinetics>
</comment>
<comment type="subunit">
    <text evidence="8 16 35">Homodimer (PubMed:17179145). Homooligomer (Probable). Interacts with UGT1A1, UGT1A3, UGT1A4, UGT1A6, UGT1A7, UGT1A9 and UGT1A10 to form heterodimers (PubMed:17179145). Isoform 1 interacts with isoform 2/i2 suggesting that oligomerization is involved in negative regulation of transferase activity by isoform 2. Isoform 1 also interacts with respective i2 isoforms of UGT1A1, UGT1A3, UGT1A4, UGT1A6, UGT1A7, UGT1A9 and UGT1A10 (PubMed:20610558).</text>
</comment>
<comment type="subcellular location">
    <subcellularLocation>
        <location evidence="29">Endoplasmic reticulum membrane</location>
        <topology evidence="1">Single-pass membrane protein</topology>
    </subcellularLocation>
</comment>
<comment type="alternative products">
    <event type="alternative splicing"/>
    <isoform>
        <id>Q9HAW9-1</id>
        <name>1</name>
        <name evidence="22">i1</name>
        <sequence type="displayed"/>
    </isoform>
    <isoform>
        <id>Q9HAW9-2</id>
        <name>2</name>
        <name evidence="22">i2</name>
        <name>UGT1A8s</name>
        <sequence type="described" ref="VSP_053964"/>
    </isoform>
</comment>
<comment type="tissue specificity">
    <molecule>Isoform 1</molecule>
    <text evidence="9">Expressed in kidney, colon and small intestine (PubMed:18004212). Not expressed in liver (PubMed:18004212).</text>
</comment>
<comment type="tissue specificity">
    <molecule>Isoform 2</molecule>
    <text evidence="9">Expressed in liver, kidney, colon and small intestine.</text>
</comment>
<comment type="miscellaneous">
    <text evidence="9">UGT1A8 isoform is part of the UGT1A complex locus which displays alternative use of promoters, first exons and terminal exons. The locus is defined by 13 first exons, which are alternatively spliced to 3 other common exons and 2 alternative terminal exons 5. From the 27 possible mRNA isoforms, 9 produce functionally active polypeptides (UGT1A1, 1A3, 1A4, 1A5, 1A6, 1A7, 1A8, 1A9 and 1A10) called isoforms 1 (i1). Use of an alternative exon 5 (5b) as terminal exon is leading to 9 additional alternatively spliced products termed isoforms i2 and which lack transferase activity.</text>
</comment>
<comment type="similarity">
    <text evidence="25">Belongs to the UDP-glycosyltransferase family.</text>
</comment>
<sequence>MARTGWTSPIPLCVSLLLTCGFAEAGKLLVVPMDGSHWFTMQSVVEKLILRGHEVVVVMPEVSWQLGKSLNCTVKTYSTSYTLEDLDREFMDFADAQWKAQVRSLFSLFLSSSNGFFNLFFSHCRSLFNDRKLVEYLKESSFDAVFLDPFDACGLIVAKYFSLPSVVFARGIACHYLEEGAQCPAPLSYVPRILLGFSDAMTFKERVRNHIMHLEEHLFCQYFSKNALEIASEILQTPVTAYDLYSHTSIWLLRTDFVLDYPKPVMPNMIFIGGINCHQGKPLPMEFEAYINASGEHGIVVFSLGSMVSEIPEKKAMAIADALGKIPQTVLWRYTGTRPSNLANNTILVKWLPQNDLLGHPMTRAFITHAGSHGVYESICNGVPMVMMPLFGDQMDNAKRMETKGAGVTLNVLEMTSEDLENALKAVINDKSYKENIMRLSSLHKDRPVEPLDLAVFWVEFVMRHKGAPHLRPAAHDLTWYQYHSLDVIGFLLAVVLTVAFITFKCCAYGYRKCLGKKGRVKKAHKSKTH</sequence>
<organism>
    <name type="scientific">Homo sapiens</name>
    <name type="common">Human</name>
    <dbReference type="NCBI Taxonomy" id="9606"/>
    <lineage>
        <taxon>Eukaryota</taxon>
        <taxon>Metazoa</taxon>
        <taxon>Chordata</taxon>
        <taxon>Craniata</taxon>
        <taxon>Vertebrata</taxon>
        <taxon>Euteleostomi</taxon>
        <taxon>Mammalia</taxon>
        <taxon>Eutheria</taxon>
        <taxon>Euarchontoglires</taxon>
        <taxon>Primates</taxon>
        <taxon>Haplorrhini</taxon>
        <taxon>Catarrhini</taxon>
        <taxon>Hominidae</taxon>
        <taxon>Homo</taxon>
    </lineage>
</organism>
<name>UD18_HUMAN</name>